<keyword id="KW-0997">Cell inner membrane</keyword>
<keyword id="KW-1003">Cell membrane</keyword>
<keyword id="KW-0249">Electron transport</keyword>
<keyword id="KW-0285">Flavoprotein</keyword>
<keyword id="KW-0288">FMN</keyword>
<keyword id="KW-0472">Membrane</keyword>
<keyword id="KW-0597">Phosphoprotein</keyword>
<keyword id="KW-1278">Translocase</keyword>
<keyword id="KW-0812">Transmembrane</keyword>
<keyword id="KW-1133">Transmembrane helix</keyword>
<keyword id="KW-0813">Transport</keyword>
<sequence>MVFRIASSPYTHNQRQTSRIMLLVLLAAVPGIAAQLWFFGWGTLVQILLASVSALLAEALVLKLRKQSVAATLKDNSALLTGLLLAVSIPPLAPWWMVVLGTVFAVIIAKQLYGGLGQNPFNPAMIGYVVLLISFPVQMTSWLPPHEIAVNIPGFIDAIQVIFSGHTASGGDMNTLRLGIDGISQATPLDTFKTSVRAGHSVEQIMQYPIYSGILAGAGWQWVNLAWLAGGVWLLWQKAIRWHIPLSFLVTLALCAMLGWLFSPETLAAPQIHLLSGATMLGAFFILTDPVTASTTNRGRLIFGALAGLLVWLIRSFGGYPDGVAFAVLLANITVPLIDYYTRPRVYGHRKG</sequence>
<feature type="chain" id="PRO_1000060343" description="Ion-translocating oxidoreductase complex subunit D">
    <location>
        <begin position="1"/>
        <end position="352"/>
    </location>
</feature>
<feature type="transmembrane region" description="Helical" evidence="1">
    <location>
        <begin position="20"/>
        <end position="40"/>
    </location>
</feature>
<feature type="transmembrane region" description="Helical" evidence="1">
    <location>
        <begin position="42"/>
        <end position="62"/>
    </location>
</feature>
<feature type="transmembrane region" description="Helical" evidence="1">
    <location>
        <begin position="78"/>
        <end position="109"/>
    </location>
</feature>
<feature type="transmembrane region" description="Helical" evidence="1">
    <location>
        <begin position="123"/>
        <end position="143"/>
    </location>
</feature>
<feature type="transmembrane region" description="Helical" evidence="1">
    <location>
        <begin position="148"/>
        <end position="168"/>
    </location>
</feature>
<feature type="transmembrane region" description="Helical" evidence="1">
    <location>
        <begin position="214"/>
        <end position="234"/>
    </location>
</feature>
<feature type="transmembrane region" description="Helical" evidence="1">
    <location>
        <begin position="242"/>
        <end position="262"/>
    </location>
</feature>
<feature type="transmembrane region" description="Helical" evidence="1">
    <location>
        <begin position="267"/>
        <end position="287"/>
    </location>
</feature>
<feature type="transmembrane region" description="Helical" evidence="1">
    <location>
        <begin position="301"/>
        <end position="321"/>
    </location>
</feature>
<feature type="transmembrane region" description="Helical" evidence="1">
    <location>
        <begin position="322"/>
        <end position="342"/>
    </location>
</feature>
<feature type="modified residue" description="FMN phosphoryl threonine" evidence="1">
    <location>
        <position position="187"/>
    </location>
</feature>
<accession>A8A0H3</accession>
<gene>
    <name evidence="1" type="primary">rsxD</name>
    <name type="synonym">rnfD</name>
    <name type="ordered locus">EcHS_A1706</name>
</gene>
<dbReference type="EC" id="7.-.-.-" evidence="1"/>
<dbReference type="EMBL" id="CP000802">
    <property type="protein sequence ID" value="ABV06027.1"/>
    <property type="molecule type" value="Genomic_DNA"/>
</dbReference>
<dbReference type="RefSeq" id="WP_000231927.1">
    <property type="nucleotide sequence ID" value="NC_009800.1"/>
</dbReference>
<dbReference type="SMR" id="A8A0H3"/>
<dbReference type="KEGG" id="ecx:EcHS_A1706"/>
<dbReference type="HOGENOM" id="CLU_042020_0_0_6"/>
<dbReference type="GO" id="GO:0005886">
    <property type="term" value="C:plasma membrane"/>
    <property type="evidence" value="ECO:0007669"/>
    <property type="project" value="UniProtKB-SubCell"/>
</dbReference>
<dbReference type="GO" id="GO:0022900">
    <property type="term" value="P:electron transport chain"/>
    <property type="evidence" value="ECO:0007669"/>
    <property type="project" value="UniProtKB-UniRule"/>
</dbReference>
<dbReference type="GO" id="GO:0055085">
    <property type="term" value="P:transmembrane transport"/>
    <property type="evidence" value="ECO:0007669"/>
    <property type="project" value="InterPro"/>
</dbReference>
<dbReference type="HAMAP" id="MF_00462">
    <property type="entry name" value="RsxD_RnfD"/>
    <property type="match status" value="1"/>
</dbReference>
<dbReference type="InterPro" id="IPR004338">
    <property type="entry name" value="NqrB/RnfD"/>
</dbReference>
<dbReference type="InterPro" id="IPR011303">
    <property type="entry name" value="RnfD_bac"/>
</dbReference>
<dbReference type="NCBIfam" id="NF002011">
    <property type="entry name" value="PRK00816.1"/>
    <property type="match status" value="1"/>
</dbReference>
<dbReference type="NCBIfam" id="TIGR01946">
    <property type="entry name" value="rnfD"/>
    <property type="match status" value="1"/>
</dbReference>
<dbReference type="PANTHER" id="PTHR30578">
    <property type="entry name" value="ELECTRON TRANSPORT COMPLEX PROTEIN RNFD"/>
    <property type="match status" value="1"/>
</dbReference>
<dbReference type="PANTHER" id="PTHR30578:SF0">
    <property type="entry name" value="ION-TRANSLOCATING OXIDOREDUCTASE COMPLEX SUBUNIT D"/>
    <property type="match status" value="1"/>
</dbReference>
<dbReference type="Pfam" id="PF03116">
    <property type="entry name" value="NQR2_RnfD_RnfE"/>
    <property type="match status" value="1"/>
</dbReference>
<comment type="function">
    <text evidence="1">Part of a membrane-bound complex that couples electron transfer with translocation of ions across the membrane. Required to maintain the reduced state of SoxR.</text>
</comment>
<comment type="cofactor">
    <cofactor evidence="1">
        <name>FMN</name>
        <dbReference type="ChEBI" id="CHEBI:58210"/>
    </cofactor>
</comment>
<comment type="subunit">
    <text evidence="1">The complex is composed of six subunits: RsxA, RsxB, RsxC, RsxD, RsxE and RsxG.</text>
</comment>
<comment type="subcellular location">
    <subcellularLocation>
        <location evidence="1">Cell inner membrane</location>
        <topology evidence="1">Multi-pass membrane protein</topology>
    </subcellularLocation>
</comment>
<comment type="similarity">
    <text evidence="1">Belongs to the NqrB/RnfD family.</text>
</comment>
<evidence type="ECO:0000255" key="1">
    <source>
        <dbReference type="HAMAP-Rule" id="MF_00462"/>
    </source>
</evidence>
<reference key="1">
    <citation type="journal article" date="2008" name="J. Bacteriol.">
        <title>The pangenome structure of Escherichia coli: comparative genomic analysis of E. coli commensal and pathogenic isolates.</title>
        <authorList>
            <person name="Rasko D.A."/>
            <person name="Rosovitz M.J."/>
            <person name="Myers G.S.A."/>
            <person name="Mongodin E.F."/>
            <person name="Fricke W.F."/>
            <person name="Gajer P."/>
            <person name="Crabtree J."/>
            <person name="Sebaihia M."/>
            <person name="Thomson N.R."/>
            <person name="Chaudhuri R."/>
            <person name="Henderson I.R."/>
            <person name="Sperandio V."/>
            <person name="Ravel J."/>
        </authorList>
    </citation>
    <scope>NUCLEOTIDE SEQUENCE [LARGE SCALE GENOMIC DNA]</scope>
    <source>
        <strain>HS</strain>
    </source>
</reference>
<name>RSXD_ECOHS</name>
<protein>
    <recommendedName>
        <fullName evidence="1">Ion-translocating oxidoreductase complex subunit D</fullName>
        <ecNumber evidence="1">7.-.-.-</ecNumber>
    </recommendedName>
    <alternativeName>
        <fullName evidence="1">Rsx electron transport complex subunit D</fullName>
    </alternativeName>
</protein>
<organism>
    <name type="scientific">Escherichia coli O9:H4 (strain HS)</name>
    <dbReference type="NCBI Taxonomy" id="331112"/>
    <lineage>
        <taxon>Bacteria</taxon>
        <taxon>Pseudomonadati</taxon>
        <taxon>Pseudomonadota</taxon>
        <taxon>Gammaproteobacteria</taxon>
        <taxon>Enterobacterales</taxon>
        <taxon>Enterobacteriaceae</taxon>
        <taxon>Escherichia</taxon>
    </lineage>
</organism>
<proteinExistence type="inferred from homology"/>